<accession>Q60AV6</accession>
<gene>
    <name evidence="5" type="primary">hpnR</name>
    <name evidence="7" type="ordered locus">MCA0738</name>
</gene>
<dbReference type="EC" id="2.1.1.-" evidence="6"/>
<dbReference type="EMBL" id="AE017282">
    <property type="protein sequence ID" value="AAU93108.1"/>
    <property type="molecule type" value="Genomic_DNA"/>
</dbReference>
<dbReference type="RefSeq" id="WP_010960068.1">
    <property type="nucleotide sequence ID" value="NC_002977.6"/>
</dbReference>
<dbReference type="SMR" id="Q60AV6"/>
<dbReference type="STRING" id="243233.MCA0738"/>
<dbReference type="GeneID" id="88223050"/>
<dbReference type="KEGG" id="mca:MCA0738"/>
<dbReference type="eggNOG" id="COG1032">
    <property type="taxonomic scope" value="Bacteria"/>
</dbReference>
<dbReference type="HOGENOM" id="CLU_021572_7_0_6"/>
<dbReference type="Proteomes" id="UP000006821">
    <property type="component" value="Chromosome"/>
</dbReference>
<dbReference type="GO" id="GO:0005829">
    <property type="term" value="C:cytosol"/>
    <property type="evidence" value="ECO:0007669"/>
    <property type="project" value="TreeGrafter"/>
</dbReference>
<dbReference type="GO" id="GO:0031419">
    <property type="term" value="F:cobalamin binding"/>
    <property type="evidence" value="ECO:0007669"/>
    <property type="project" value="InterPro"/>
</dbReference>
<dbReference type="GO" id="GO:0051536">
    <property type="term" value="F:iron-sulfur cluster binding"/>
    <property type="evidence" value="ECO:0007669"/>
    <property type="project" value="UniProtKB-KW"/>
</dbReference>
<dbReference type="GO" id="GO:0046872">
    <property type="term" value="F:metal ion binding"/>
    <property type="evidence" value="ECO:0007669"/>
    <property type="project" value="UniProtKB-KW"/>
</dbReference>
<dbReference type="GO" id="GO:0008168">
    <property type="term" value="F:methyltransferase activity"/>
    <property type="evidence" value="ECO:0007669"/>
    <property type="project" value="UniProtKB-KW"/>
</dbReference>
<dbReference type="GO" id="GO:0032259">
    <property type="term" value="P:methylation"/>
    <property type="evidence" value="ECO:0007669"/>
    <property type="project" value="UniProtKB-KW"/>
</dbReference>
<dbReference type="CDD" id="cd01335">
    <property type="entry name" value="Radical_SAM"/>
    <property type="match status" value="1"/>
</dbReference>
<dbReference type="CDD" id="cd02068">
    <property type="entry name" value="radical_SAM_B12_BD"/>
    <property type="match status" value="1"/>
</dbReference>
<dbReference type="Gene3D" id="3.20.20.70">
    <property type="entry name" value="Aldolase class I"/>
    <property type="match status" value="1"/>
</dbReference>
<dbReference type="Gene3D" id="3.40.50.280">
    <property type="entry name" value="Cobalamin-binding domain"/>
    <property type="match status" value="1"/>
</dbReference>
<dbReference type="InterPro" id="IPR013785">
    <property type="entry name" value="Aldolase_TIM"/>
</dbReference>
<dbReference type="InterPro" id="IPR006158">
    <property type="entry name" value="Cobalamin-bd"/>
</dbReference>
<dbReference type="InterPro" id="IPR036724">
    <property type="entry name" value="Cobalamin-bd_sf"/>
</dbReference>
<dbReference type="InterPro" id="IPR006638">
    <property type="entry name" value="Elp3/MiaA/NifB-like_rSAM"/>
</dbReference>
<dbReference type="InterPro" id="IPR027564">
    <property type="entry name" value="HpnR_B12_rSAM"/>
</dbReference>
<dbReference type="InterPro" id="IPR007197">
    <property type="entry name" value="rSAM"/>
</dbReference>
<dbReference type="InterPro" id="IPR051198">
    <property type="entry name" value="Tetrapyrrole_Bchl_Biosynth_MTs"/>
</dbReference>
<dbReference type="NCBIfam" id="TIGR04367">
    <property type="entry name" value="HpnR_B12_rSAM"/>
    <property type="match status" value="1"/>
</dbReference>
<dbReference type="PANTHER" id="PTHR43409">
    <property type="entry name" value="ANAEROBIC MAGNESIUM-PROTOPORPHYRIN IX MONOMETHYL ESTER CYCLASE-RELATED"/>
    <property type="match status" value="1"/>
</dbReference>
<dbReference type="PANTHER" id="PTHR43409:SF7">
    <property type="entry name" value="BLL1977 PROTEIN"/>
    <property type="match status" value="1"/>
</dbReference>
<dbReference type="Pfam" id="PF02310">
    <property type="entry name" value="B12-binding"/>
    <property type="match status" value="1"/>
</dbReference>
<dbReference type="Pfam" id="PF04055">
    <property type="entry name" value="Radical_SAM"/>
    <property type="match status" value="1"/>
</dbReference>
<dbReference type="SFLD" id="SFLDF00565">
    <property type="entry name" value="hopanoid_C3-methyltransferase"/>
    <property type="match status" value="1"/>
</dbReference>
<dbReference type="SFLD" id="SFLDS00029">
    <property type="entry name" value="Radical_SAM"/>
    <property type="match status" value="1"/>
</dbReference>
<dbReference type="SMART" id="SM00729">
    <property type="entry name" value="Elp3"/>
    <property type="match status" value="1"/>
</dbReference>
<dbReference type="SUPFAM" id="SSF52242">
    <property type="entry name" value="Cobalamin (vitamin B12)-binding domain"/>
    <property type="match status" value="1"/>
</dbReference>
<dbReference type="SUPFAM" id="SSF102114">
    <property type="entry name" value="Radical SAM enzymes"/>
    <property type="match status" value="1"/>
</dbReference>
<dbReference type="PROSITE" id="PS51332">
    <property type="entry name" value="B12_BINDING"/>
    <property type="match status" value="1"/>
</dbReference>
<dbReference type="PROSITE" id="PS51918">
    <property type="entry name" value="RADICAL_SAM"/>
    <property type="match status" value="1"/>
</dbReference>
<organism>
    <name type="scientific">Methylococcus capsulatus (strain ATCC 33009 / NCIMB 11132 / Bath)</name>
    <dbReference type="NCBI Taxonomy" id="243233"/>
    <lineage>
        <taxon>Bacteria</taxon>
        <taxon>Pseudomonadati</taxon>
        <taxon>Pseudomonadota</taxon>
        <taxon>Gammaproteobacteria</taxon>
        <taxon>Methylococcales</taxon>
        <taxon>Methylococcaceae</taxon>
        <taxon>Methylococcus</taxon>
    </lineage>
</organism>
<reference key="1">
    <citation type="journal article" date="2004" name="PLoS Biol.">
        <title>Genomic insights into methanotrophy: the complete genome sequence of Methylococcus capsulatus (Bath).</title>
        <authorList>
            <person name="Ward N.L."/>
            <person name="Larsen O."/>
            <person name="Sakwa J."/>
            <person name="Bruseth L."/>
            <person name="Khouri H.M."/>
            <person name="Durkin A.S."/>
            <person name="Dimitrov G."/>
            <person name="Jiang L."/>
            <person name="Scanlan D."/>
            <person name="Kang K.H."/>
            <person name="Lewis M.R."/>
            <person name="Nelson K.E."/>
            <person name="Methe B.A."/>
            <person name="Wu M."/>
            <person name="Heidelberg J.F."/>
            <person name="Paulsen I.T."/>
            <person name="Fouts D.E."/>
            <person name="Ravel J."/>
            <person name="Tettelin H."/>
            <person name="Ren Q."/>
            <person name="Read T.D."/>
            <person name="DeBoy R.T."/>
            <person name="Seshadri R."/>
            <person name="Salzberg S.L."/>
            <person name="Jensen H.B."/>
            <person name="Birkeland N.K."/>
            <person name="Nelson W.C."/>
            <person name="Dodson R.J."/>
            <person name="Grindhaug S.H."/>
            <person name="Holt I.E."/>
            <person name="Eidhammer I."/>
            <person name="Jonasen I."/>
            <person name="Vanaken S."/>
            <person name="Utterback T.R."/>
            <person name="Feldblyum T.V."/>
            <person name="Fraser C.M."/>
            <person name="Lillehaug J.R."/>
            <person name="Eisen J.A."/>
        </authorList>
    </citation>
    <scope>NUCLEOTIDE SEQUENCE [LARGE SCALE GENOMIC DNA]</scope>
    <source>
        <strain>ATCC 33009 / NCIMB 11132 / Bath</strain>
    </source>
</reference>
<reference key="2">
    <citation type="journal article" date="2012" name="Proc. Natl. Acad. Sci. U.S.A.">
        <title>Discovery, taxonomic distribution, and phenotypic characterization of a gene required for 3-methylhopanoid production.</title>
        <authorList>
            <person name="Welander P.V."/>
            <person name="Summons R.E."/>
        </authorList>
    </citation>
    <scope>FUNCTION IN METHYLATION OF HOPANOIDS</scope>
    <scope>DISRUPTION PHENOTYPE</scope>
    <source>
        <strain>ATCC 33009 / NCIMB 11132 / Bath</strain>
    </source>
</reference>
<feature type="chain" id="PRO_0000434049" description="Hopanoid C-3 methylase">
    <location>
        <begin position="1"/>
        <end position="515"/>
    </location>
</feature>
<feature type="domain" description="B12-binding" evidence="2">
    <location>
        <begin position="8"/>
        <end position="141"/>
    </location>
</feature>
<feature type="domain" description="Radical SAM core" evidence="3">
    <location>
        <begin position="181"/>
        <end position="395"/>
    </location>
</feature>
<feature type="binding site" evidence="1">
    <location>
        <position position="195"/>
    </location>
    <ligand>
        <name>[4Fe-4S] cluster</name>
        <dbReference type="ChEBI" id="CHEBI:49883"/>
        <note>4Fe-4S-S-AdoMet</note>
    </ligand>
</feature>
<feature type="binding site" evidence="1">
    <location>
        <position position="199"/>
    </location>
    <ligand>
        <name>[4Fe-4S] cluster</name>
        <dbReference type="ChEBI" id="CHEBI:49883"/>
        <note>4Fe-4S-S-AdoMet</note>
    </ligand>
</feature>
<feature type="binding site" evidence="1">
    <location>
        <position position="202"/>
    </location>
    <ligand>
        <name>[4Fe-4S] cluster</name>
        <dbReference type="ChEBI" id="CHEBI:49883"/>
        <note>4Fe-4S-S-AdoMet</note>
    </ligand>
</feature>
<sequence>MKVFCVHPSPLMYTKVFLRLEPLGLELVAESLRRAGHDIRLMDLQVESHADFLRELDTWRPDVVCFSLNYLANVPEVIDLAKTAKSRLPECFTFVGGHSASFVAKDLLDHGEGLLDCVLRGEGEAGAPKLLETLARRGNIDEVPGVVSLTGEGPPPGFTDNLDEHLPARDLLKYRRKYFLGTLDPCASIEFSRGCPWDCSFCSAWTFYGRSYRVMSTERIMEDLRRIKEPGIFIVDDVAFIQAQHGMEIGEAIAREGIRKQYYLETRGDVLLRNKEVFKLWKKLGMEYMFLGVEAIDAEGLQKFRKRVSLGKNFEALEFARSLGITVAINLIADPDWDRERFEVIRQWCMEIPEIVNISVNTPYPGTESWHTESRQLTTRDYRLFDIQHAVLPTRLPLPEFYGELVKTQQVLYKKHMGWAAARDTLKILGGHLLRGQTNFLRSLWKFNSVFNPELQLADHRQPVKYPMTLPPAPTEQKIEAKTLYVHRSQGRKSRALDDATEKFVDEGRMGAATG</sequence>
<keyword id="KW-0408">Iron</keyword>
<keyword id="KW-0411">Iron-sulfur</keyword>
<keyword id="KW-0479">Metal-binding</keyword>
<keyword id="KW-0489">Methyltransferase</keyword>
<keyword id="KW-1185">Reference proteome</keyword>
<keyword id="KW-0949">S-adenosyl-L-methionine</keyword>
<keyword id="KW-0808">Transferase</keyword>
<name>HPNR_METCA</name>
<protein>
    <recommendedName>
        <fullName evidence="6">Hopanoid C-3 methylase</fullName>
        <ecNumber evidence="6">2.1.1.-</ecNumber>
    </recommendedName>
</protein>
<evidence type="ECO:0000250" key="1">
    <source>
        <dbReference type="UniProtKB" id="Q9X2H6"/>
    </source>
</evidence>
<evidence type="ECO:0000255" key="2">
    <source>
        <dbReference type="PROSITE-ProRule" id="PRU00666"/>
    </source>
</evidence>
<evidence type="ECO:0000255" key="3">
    <source>
        <dbReference type="PROSITE-ProRule" id="PRU01266"/>
    </source>
</evidence>
<evidence type="ECO:0000269" key="4">
    <source>
    </source>
</evidence>
<evidence type="ECO:0000303" key="5">
    <source>
    </source>
</evidence>
<evidence type="ECO:0000305" key="6"/>
<evidence type="ECO:0000312" key="7">
    <source>
        <dbReference type="EMBL" id="AAU93108.1"/>
    </source>
</evidence>
<comment type="function">
    <text evidence="4">Required for methylation of hopanoids at the C-3 position.</text>
</comment>
<comment type="cofactor">
    <cofactor evidence="1">
        <name>[4Fe-4S] cluster</name>
        <dbReference type="ChEBI" id="CHEBI:49883"/>
    </cofactor>
    <text evidence="1">Binds 1 [4Fe-4S] cluster. The cluster is coordinated with 3 cysteines and an exchangeable S-adenosyl-L-methionine.</text>
</comment>
<comment type="disruption phenotype">
    <text evidence="4">Deletion mutant can produce both the desmethyl aminobacteriohopanepentol and aminobacteriohopanetetrol but not their C-3 methylated counterparts. Deletion results in reduced intracytoplasmic membranes and in decreased survival in late stationary phase.</text>
</comment>
<comment type="similarity">
    <text evidence="6">Belongs to the radical SAM superfamily.</text>
</comment>
<proteinExistence type="evidence at protein level"/>